<protein>
    <recommendedName>
        <fullName evidence="1">Large ribosomal subunit protein bL34</fullName>
    </recommendedName>
    <alternativeName>
        <fullName evidence="2">50S ribosomal protein L34</fullName>
    </alternativeName>
</protein>
<comment type="similarity">
    <text evidence="1">Belongs to the bacterial ribosomal protein bL34 family.</text>
</comment>
<reference key="1">
    <citation type="journal article" date="2011" name="Stand. Genomic Sci.">
        <title>Complete genome sequence of 'Thioalkalivibrio sulfidophilus' HL-EbGr7.</title>
        <authorList>
            <person name="Muyzer G."/>
            <person name="Sorokin D.Y."/>
            <person name="Mavromatis K."/>
            <person name="Lapidus A."/>
            <person name="Clum A."/>
            <person name="Ivanova N."/>
            <person name="Pati A."/>
            <person name="d'Haeseleer P."/>
            <person name="Woyke T."/>
            <person name="Kyrpides N.C."/>
        </authorList>
    </citation>
    <scope>NUCLEOTIDE SEQUENCE [LARGE SCALE GENOMIC DNA]</scope>
    <source>
        <strain>HL-EbGR7</strain>
    </source>
</reference>
<evidence type="ECO:0000255" key="1">
    <source>
        <dbReference type="HAMAP-Rule" id="MF_00391"/>
    </source>
</evidence>
<evidence type="ECO:0000305" key="2"/>
<name>RL34_THISH</name>
<gene>
    <name evidence="1" type="primary">rpmH</name>
    <name type="ordered locus">Tgr7_3321</name>
</gene>
<sequence length="44" mass="5109">MKRTFQPSTLKRKRTHGFRARMATRGGRKVLAARRAKGRVRLCP</sequence>
<dbReference type="EMBL" id="CP001339">
    <property type="protein sequence ID" value="ACL74388.1"/>
    <property type="molecule type" value="Genomic_DNA"/>
</dbReference>
<dbReference type="RefSeq" id="WP_012639850.1">
    <property type="nucleotide sequence ID" value="NC_011901.1"/>
</dbReference>
<dbReference type="SMR" id="B8GRD4"/>
<dbReference type="STRING" id="396588.Tgr7_3321"/>
<dbReference type="KEGG" id="tgr:Tgr7_3321"/>
<dbReference type="eggNOG" id="COG0230">
    <property type="taxonomic scope" value="Bacteria"/>
</dbReference>
<dbReference type="HOGENOM" id="CLU_129938_2_0_6"/>
<dbReference type="OrthoDB" id="9804164at2"/>
<dbReference type="Proteomes" id="UP000002383">
    <property type="component" value="Chromosome"/>
</dbReference>
<dbReference type="GO" id="GO:1990904">
    <property type="term" value="C:ribonucleoprotein complex"/>
    <property type="evidence" value="ECO:0007669"/>
    <property type="project" value="UniProtKB-KW"/>
</dbReference>
<dbReference type="GO" id="GO:0005840">
    <property type="term" value="C:ribosome"/>
    <property type="evidence" value="ECO:0007669"/>
    <property type="project" value="UniProtKB-KW"/>
</dbReference>
<dbReference type="GO" id="GO:0003735">
    <property type="term" value="F:structural constituent of ribosome"/>
    <property type="evidence" value="ECO:0007669"/>
    <property type="project" value="InterPro"/>
</dbReference>
<dbReference type="GO" id="GO:0006412">
    <property type="term" value="P:translation"/>
    <property type="evidence" value="ECO:0007669"/>
    <property type="project" value="UniProtKB-UniRule"/>
</dbReference>
<dbReference type="FunFam" id="1.10.287.3980:FF:000001">
    <property type="entry name" value="Mitochondrial ribosomal protein L34"/>
    <property type="match status" value="1"/>
</dbReference>
<dbReference type="Gene3D" id="1.10.287.3980">
    <property type="match status" value="1"/>
</dbReference>
<dbReference type="HAMAP" id="MF_00391">
    <property type="entry name" value="Ribosomal_bL34"/>
    <property type="match status" value="1"/>
</dbReference>
<dbReference type="InterPro" id="IPR000271">
    <property type="entry name" value="Ribosomal_bL34"/>
</dbReference>
<dbReference type="InterPro" id="IPR020939">
    <property type="entry name" value="Ribosomal_bL34_CS"/>
</dbReference>
<dbReference type="NCBIfam" id="TIGR01030">
    <property type="entry name" value="rpmH_bact"/>
    <property type="match status" value="1"/>
</dbReference>
<dbReference type="PANTHER" id="PTHR14503:SF4">
    <property type="entry name" value="LARGE RIBOSOMAL SUBUNIT PROTEIN BL34M"/>
    <property type="match status" value="1"/>
</dbReference>
<dbReference type="PANTHER" id="PTHR14503">
    <property type="entry name" value="MITOCHONDRIAL RIBOSOMAL PROTEIN 34 FAMILY MEMBER"/>
    <property type="match status" value="1"/>
</dbReference>
<dbReference type="Pfam" id="PF00468">
    <property type="entry name" value="Ribosomal_L34"/>
    <property type="match status" value="1"/>
</dbReference>
<dbReference type="PROSITE" id="PS00784">
    <property type="entry name" value="RIBOSOMAL_L34"/>
    <property type="match status" value="1"/>
</dbReference>
<feature type="chain" id="PRO_1000196134" description="Large ribosomal subunit protein bL34">
    <location>
        <begin position="1"/>
        <end position="44"/>
    </location>
</feature>
<accession>B8GRD4</accession>
<organism>
    <name type="scientific">Thioalkalivibrio sulfidiphilus (strain HL-EbGR7)</name>
    <dbReference type="NCBI Taxonomy" id="396588"/>
    <lineage>
        <taxon>Bacteria</taxon>
        <taxon>Pseudomonadati</taxon>
        <taxon>Pseudomonadota</taxon>
        <taxon>Gammaproteobacteria</taxon>
        <taxon>Chromatiales</taxon>
        <taxon>Ectothiorhodospiraceae</taxon>
        <taxon>Thioalkalivibrio</taxon>
    </lineage>
</organism>
<proteinExistence type="inferred from homology"/>
<keyword id="KW-1185">Reference proteome</keyword>
<keyword id="KW-0687">Ribonucleoprotein</keyword>
<keyword id="KW-0689">Ribosomal protein</keyword>